<evidence type="ECO:0000255" key="1">
    <source>
        <dbReference type="HAMAP-Rule" id="MF_01810"/>
    </source>
</evidence>
<evidence type="ECO:0000256" key="2">
    <source>
        <dbReference type="SAM" id="MobiDB-lite"/>
    </source>
</evidence>
<organism>
    <name type="scientific">Klebsiella pneumoniae subsp. pneumoniae (strain ATCC 700721 / MGH 78578)</name>
    <dbReference type="NCBI Taxonomy" id="272620"/>
    <lineage>
        <taxon>Bacteria</taxon>
        <taxon>Pseudomonadati</taxon>
        <taxon>Pseudomonadota</taxon>
        <taxon>Gammaproteobacteria</taxon>
        <taxon>Enterobacterales</taxon>
        <taxon>Enterobacteriaceae</taxon>
        <taxon>Klebsiella/Raoultella group</taxon>
        <taxon>Klebsiella</taxon>
        <taxon>Klebsiella pneumoniae complex</taxon>
    </lineage>
</organism>
<reference key="1">
    <citation type="submission" date="2006-09" db="EMBL/GenBank/DDBJ databases">
        <authorList>
            <consortium name="The Klebsiella pneumonia Genome Sequencing Project"/>
            <person name="McClelland M."/>
            <person name="Sanderson E.K."/>
            <person name="Spieth J."/>
            <person name="Clifton W.S."/>
            <person name="Latreille P."/>
            <person name="Sabo A."/>
            <person name="Pepin K."/>
            <person name="Bhonagiri V."/>
            <person name="Porwollik S."/>
            <person name="Ali J."/>
            <person name="Wilson R.K."/>
        </authorList>
    </citation>
    <scope>NUCLEOTIDE SEQUENCE [LARGE SCALE GENOMIC DNA]</scope>
    <source>
        <strain>ATCC 700721 / MGH 78578</strain>
    </source>
</reference>
<keyword id="KW-0997">Cell inner membrane</keyword>
<keyword id="KW-1003">Cell membrane</keyword>
<keyword id="KW-0143">Chaperone</keyword>
<keyword id="KW-0472">Membrane</keyword>
<keyword id="KW-0653">Protein transport</keyword>
<keyword id="KW-0812">Transmembrane</keyword>
<keyword id="KW-1133">Transmembrane helix</keyword>
<keyword id="KW-0813">Transport</keyword>
<dbReference type="EMBL" id="CP000647">
    <property type="protein sequence ID" value="ABR79492.1"/>
    <property type="molecule type" value="Genomic_DNA"/>
</dbReference>
<dbReference type="RefSeq" id="WP_004150295.1">
    <property type="nucleotide sequence ID" value="NC_009648.1"/>
</dbReference>
<dbReference type="SMR" id="A6TG08"/>
<dbReference type="STRING" id="272620.KPN_04109"/>
<dbReference type="jPOST" id="A6TG08"/>
<dbReference type="PaxDb" id="272620-KPN_04109"/>
<dbReference type="EnsemblBacteria" id="ABR79492">
    <property type="protein sequence ID" value="ABR79492"/>
    <property type="gene ID" value="KPN_04109"/>
</dbReference>
<dbReference type="KEGG" id="kpn:KPN_04109"/>
<dbReference type="HOGENOM" id="CLU_016535_3_0_6"/>
<dbReference type="Proteomes" id="UP000000265">
    <property type="component" value="Chromosome"/>
</dbReference>
<dbReference type="GO" id="GO:0005886">
    <property type="term" value="C:plasma membrane"/>
    <property type="evidence" value="ECO:0007669"/>
    <property type="project" value="UniProtKB-SubCell"/>
</dbReference>
<dbReference type="GO" id="GO:0032977">
    <property type="term" value="F:membrane insertase activity"/>
    <property type="evidence" value="ECO:0007669"/>
    <property type="project" value="InterPro"/>
</dbReference>
<dbReference type="GO" id="GO:0051205">
    <property type="term" value="P:protein insertion into membrane"/>
    <property type="evidence" value="ECO:0007669"/>
    <property type="project" value="TreeGrafter"/>
</dbReference>
<dbReference type="GO" id="GO:0015031">
    <property type="term" value="P:protein transport"/>
    <property type="evidence" value="ECO:0007669"/>
    <property type="project" value="UniProtKB-KW"/>
</dbReference>
<dbReference type="CDD" id="cd20070">
    <property type="entry name" value="5TM_YidC_Alb3"/>
    <property type="match status" value="1"/>
</dbReference>
<dbReference type="CDD" id="cd19961">
    <property type="entry name" value="EcYidC-like_peri"/>
    <property type="match status" value="1"/>
</dbReference>
<dbReference type="FunFam" id="2.70.98.90:FF:000001">
    <property type="entry name" value="Membrane protein insertase YidC"/>
    <property type="match status" value="1"/>
</dbReference>
<dbReference type="Gene3D" id="2.70.98.90">
    <property type="match status" value="1"/>
</dbReference>
<dbReference type="HAMAP" id="MF_01810">
    <property type="entry name" value="YidC_type1"/>
    <property type="match status" value="1"/>
</dbReference>
<dbReference type="InterPro" id="IPR019998">
    <property type="entry name" value="Membr_insert_YidC"/>
</dbReference>
<dbReference type="InterPro" id="IPR028053">
    <property type="entry name" value="Membr_insert_YidC_N"/>
</dbReference>
<dbReference type="InterPro" id="IPR001708">
    <property type="entry name" value="YidC/ALB3/OXA1/COX18"/>
</dbReference>
<dbReference type="InterPro" id="IPR028055">
    <property type="entry name" value="YidC/Oxa/ALB_C"/>
</dbReference>
<dbReference type="InterPro" id="IPR047196">
    <property type="entry name" value="YidC_ALB_C"/>
</dbReference>
<dbReference type="InterPro" id="IPR038221">
    <property type="entry name" value="YidC_periplasmic_sf"/>
</dbReference>
<dbReference type="NCBIfam" id="NF002351">
    <property type="entry name" value="PRK01318.1-1"/>
    <property type="match status" value="1"/>
</dbReference>
<dbReference type="NCBIfam" id="NF002352">
    <property type="entry name" value="PRK01318.1-3"/>
    <property type="match status" value="1"/>
</dbReference>
<dbReference type="NCBIfam" id="NF002353">
    <property type="entry name" value="PRK01318.1-4"/>
    <property type="match status" value="1"/>
</dbReference>
<dbReference type="NCBIfam" id="TIGR03593">
    <property type="entry name" value="yidC_nterm"/>
    <property type="match status" value="1"/>
</dbReference>
<dbReference type="NCBIfam" id="TIGR03592">
    <property type="entry name" value="yidC_oxa1_cterm"/>
    <property type="match status" value="1"/>
</dbReference>
<dbReference type="PANTHER" id="PTHR12428:SF65">
    <property type="entry name" value="CYTOCHROME C OXIDASE ASSEMBLY PROTEIN COX18, MITOCHONDRIAL"/>
    <property type="match status" value="1"/>
</dbReference>
<dbReference type="PANTHER" id="PTHR12428">
    <property type="entry name" value="OXA1"/>
    <property type="match status" value="1"/>
</dbReference>
<dbReference type="Pfam" id="PF02096">
    <property type="entry name" value="60KD_IMP"/>
    <property type="match status" value="1"/>
</dbReference>
<dbReference type="Pfam" id="PF14849">
    <property type="entry name" value="YidC_periplas"/>
    <property type="match status" value="1"/>
</dbReference>
<dbReference type="PRINTS" id="PR00701">
    <property type="entry name" value="60KDINNERMP"/>
</dbReference>
<dbReference type="PRINTS" id="PR01900">
    <property type="entry name" value="YIDCPROTEIN"/>
</dbReference>
<comment type="function">
    <text evidence="1">Required for the insertion and/or proper folding and/or complex formation of integral membrane proteins into the membrane. Involved in integration of membrane proteins that insert both dependently and independently of the Sec translocase complex, as well as at least some lipoproteins. Aids folding of multispanning membrane proteins.</text>
</comment>
<comment type="subunit">
    <text evidence="1">Interacts with the Sec translocase complex via SecD. Specifically interacts with transmembrane segments of nascent integral membrane proteins during membrane integration.</text>
</comment>
<comment type="subcellular location">
    <subcellularLocation>
        <location evidence="1">Cell inner membrane</location>
        <topology evidence="1">Multi-pass membrane protein</topology>
    </subcellularLocation>
</comment>
<comment type="similarity">
    <text evidence="1">Belongs to the OXA1/ALB3/YidC family. Type 1 subfamily.</text>
</comment>
<name>YIDC_KLEP7</name>
<accession>A6TG08</accession>
<proteinExistence type="inferred from homology"/>
<feature type="chain" id="PRO_1000070111" description="Membrane protein insertase YidC">
    <location>
        <begin position="1"/>
        <end position="548"/>
    </location>
</feature>
<feature type="transmembrane region" description="Helical" evidence="1">
    <location>
        <begin position="6"/>
        <end position="26"/>
    </location>
</feature>
<feature type="transmembrane region" description="Helical" evidence="1">
    <location>
        <begin position="345"/>
        <end position="365"/>
    </location>
</feature>
<feature type="transmembrane region" description="Helical" evidence="1">
    <location>
        <begin position="420"/>
        <end position="440"/>
    </location>
</feature>
<feature type="transmembrane region" description="Helical" evidence="1">
    <location>
        <begin position="458"/>
        <end position="478"/>
    </location>
</feature>
<feature type="transmembrane region" description="Helical" evidence="1">
    <location>
        <begin position="499"/>
        <end position="519"/>
    </location>
</feature>
<feature type="region of interest" description="Disordered" evidence="2">
    <location>
        <begin position="28"/>
        <end position="52"/>
    </location>
</feature>
<feature type="compositionally biased region" description="Low complexity" evidence="2">
    <location>
        <begin position="29"/>
        <end position="41"/>
    </location>
</feature>
<protein>
    <recommendedName>
        <fullName evidence="1">Membrane protein insertase YidC</fullName>
    </recommendedName>
    <alternativeName>
        <fullName evidence="1">Foldase YidC</fullName>
    </alternativeName>
    <alternativeName>
        <fullName evidence="1">Membrane integrase YidC</fullName>
    </alternativeName>
    <alternativeName>
        <fullName evidence="1">Membrane protein YidC</fullName>
    </alternativeName>
</protein>
<gene>
    <name evidence="1" type="primary">yidC</name>
    <name type="ordered locus">KPN78578_40680</name>
    <name type="ORF">KPN_04109</name>
</gene>
<sequence>MDSQRNLLIIALLFVSFMIWQAWEQDKNPQPQQQTTQTTTTAAGSAADQGVPASGQGKLITVKTDVLELTINTNGGDIEQALLLAYPKTLKSTEPFQLLETTPQFVYQAQSGLTGRDGPDNPANGPRPLYNVDKEAFVLADGQDELVIPLTYTDKAGNVFTKTFTLKRGGYAVNVGYSVQNASEKPLEVSTFGQLKQTAALPTSRDTQTGGLSTMHTFRGAAFSTADSKYEKYKFDTILDNENLNVSTKNGWVAMLQQYFTTAWVPRNNGTNNFYTANLGNGVVAIGYKSQPVLVQPGQTDKLQSTLWVGPAIQDKMAAVAPHLDLTVDYGWLWFISQPLFKLLKFIHSFLGNWGFSIIVITFIVRGIMYPLTKAQYTSMAKMRMLQPKIQAMRERLGDDKQRQSQEMMALYKAEKVNPLGGCFPLIIQMPIFLALYYMLSASVELRHAPFILWIHDLSAQDPYYILPIIMGATMFFIQKMSPTTVTDPMQQKIMTFMPVIFTVFFLWFPSGLVVYYIVSNLVTIIQQQLIYRGLEKRGLHSREKKKS</sequence>